<name>SYP_TRIL1</name>
<comment type="function">
    <text evidence="1">Catalyzes the attachment of proline to tRNA(Pro) in a two-step reaction: proline is first activated by ATP to form Pro-AMP and then transferred to the acceptor end of tRNA(Pro). As ProRS can inadvertently accommodate and process non-cognate amino acids such as alanine and cysteine, to avoid such errors it has two additional distinct editing activities against alanine. One activity is designated as 'pretransfer' editing and involves the tRNA(Pro)-independent hydrolysis of activated Ala-AMP. The other activity is designated 'posttransfer' editing and involves deacylation of mischarged Ala-tRNA(Pro). The misacylated Cys-tRNA(Pro) is not edited by ProRS.</text>
</comment>
<comment type="catalytic activity">
    <reaction evidence="1">
        <text>tRNA(Pro) + L-proline + ATP = L-prolyl-tRNA(Pro) + AMP + diphosphate</text>
        <dbReference type="Rhea" id="RHEA:14305"/>
        <dbReference type="Rhea" id="RHEA-COMP:9700"/>
        <dbReference type="Rhea" id="RHEA-COMP:9702"/>
        <dbReference type="ChEBI" id="CHEBI:30616"/>
        <dbReference type="ChEBI" id="CHEBI:33019"/>
        <dbReference type="ChEBI" id="CHEBI:60039"/>
        <dbReference type="ChEBI" id="CHEBI:78442"/>
        <dbReference type="ChEBI" id="CHEBI:78532"/>
        <dbReference type="ChEBI" id="CHEBI:456215"/>
        <dbReference type="EC" id="6.1.1.15"/>
    </reaction>
</comment>
<comment type="subunit">
    <text evidence="1">Homodimer.</text>
</comment>
<comment type="subcellular location">
    <subcellularLocation>
        <location evidence="1">Cytoplasm</location>
    </subcellularLocation>
</comment>
<comment type="domain">
    <text evidence="1">Consists of three domains: the N-terminal catalytic domain, the editing domain and the C-terminal anticodon-binding domain.</text>
</comment>
<comment type="similarity">
    <text evidence="1">Belongs to the class-II aminoacyl-tRNA synthetase family. ProS type 1 subfamily.</text>
</comment>
<proteinExistence type="inferred from homology"/>
<gene>
    <name evidence="1" type="primary">proS</name>
    <name type="ordered locus">Glov_1909</name>
</gene>
<accession>B3E1X5</accession>
<keyword id="KW-0030">Aminoacyl-tRNA synthetase</keyword>
<keyword id="KW-0067">ATP-binding</keyword>
<keyword id="KW-0963">Cytoplasm</keyword>
<keyword id="KW-0436">Ligase</keyword>
<keyword id="KW-0547">Nucleotide-binding</keyword>
<keyword id="KW-0648">Protein biosynthesis</keyword>
<keyword id="KW-1185">Reference proteome</keyword>
<dbReference type="EC" id="6.1.1.15" evidence="1"/>
<dbReference type="EMBL" id="CP001089">
    <property type="protein sequence ID" value="ACD95625.1"/>
    <property type="molecule type" value="Genomic_DNA"/>
</dbReference>
<dbReference type="RefSeq" id="WP_012469964.1">
    <property type="nucleotide sequence ID" value="NC_010814.1"/>
</dbReference>
<dbReference type="SMR" id="B3E1X5"/>
<dbReference type="STRING" id="398767.Glov_1909"/>
<dbReference type="KEGG" id="glo:Glov_1909"/>
<dbReference type="eggNOG" id="COG0442">
    <property type="taxonomic scope" value="Bacteria"/>
</dbReference>
<dbReference type="HOGENOM" id="CLU_016739_0_0_7"/>
<dbReference type="OrthoDB" id="9809052at2"/>
<dbReference type="Proteomes" id="UP000002420">
    <property type="component" value="Chromosome"/>
</dbReference>
<dbReference type="GO" id="GO:0005829">
    <property type="term" value="C:cytosol"/>
    <property type="evidence" value="ECO:0007669"/>
    <property type="project" value="TreeGrafter"/>
</dbReference>
<dbReference type="GO" id="GO:0002161">
    <property type="term" value="F:aminoacyl-tRNA deacylase activity"/>
    <property type="evidence" value="ECO:0007669"/>
    <property type="project" value="InterPro"/>
</dbReference>
<dbReference type="GO" id="GO:0005524">
    <property type="term" value="F:ATP binding"/>
    <property type="evidence" value="ECO:0007669"/>
    <property type="project" value="UniProtKB-UniRule"/>
</dbReference>
<dbReference type="GO" id="GO:0004827">
    <property type="term" value="F:proline-tRNA ligase activity"/>
    <property type="evidence" value="ECO:0007669"/>
    <property type="project" value="UniProtKB-UniRule"/>
</dbReference>
<dbReference type="GO" id="GO:0006433">
    <property type="term" value="P:prolyl-tRNA aminoacylation"/>
    <property type="evidence" value="ECO:0007669"/>
    <property type="project" value="UniProtKB-UniRule"/>
</dbReference>
<dbReference type="CDD" id="cd04334">
    <property type="entry name" value="ProRS-INS"/>
    <property type="match status" value="1"/>
</dbReference>
<dbReference type="CDD" id="cd00861">
    <property type="entry name" value="ProRS_anticodon_short"/>
    <property type="match status" value="1"/>
</dbReference>
<dbReference type="CDD" id="cd00779">
    <property type="entry name" value="ProRS_core_prok"/>
    <property type="match status" value="1"/>
</dbReference>
<dbReference type="FunFam" id="3.30.930.10:FF:000012">
    <property type="entry name" value="Proline--tRNA ligase"/>
    <property type="match status" value="1"/>
</dbReference>
<dbReference type="FunFam" id="3.30.930.10:FF:000065">
    <property type="entry name" value="Proline--tRNA ligase"/>
    <property type="match status" value="1"/>
</dbReference>
<dbReference type="Gene3D" id="3.40.50.800">
    <property type="entry name" value="Anticodon-binding domain"/>
    <property type="match status" value="1"/>
</dbReference>
<dbReference type="Gene3D" id="3.30.930.10">
    <property type="entry name" value="Bira Bifunctional Protein, Domain 2"/>
    <property type="match status" value="2"/>
</dbReference>
<dbReference type="Gene3D" id="3.90.960.10">
    <property type="entry name" value="YbaK/aminoacyl-tRNA synthetase-associated domain"/>
    <property type="match status" value="1"/>
</dbReference>
<dbReference type="HAMAP" id="MF_01569">
    <property type="entry name" value="Pro_tRNA_synth_type1"/>
    <property type="match status" value="1"/>
</dbReference>
<dbReference type="InterPro" id="IPR002314">
    <property type="entry name" value="aa-tRNA-synt_IIb"/>
</dbReference>
<dbReference type="InterPro" id="IPR006195">
    <property type="entry name" value="aa-tRNA-synth_II"/>
</dbReference>
<dbReference type="InterPro" id="IPR045864">
    <property type="entry name" value="aa-tRNA-synth_II/BPL/LPL"/>
</dbReference>
<dbReference type="InterPro" id="IPR004154">
    <property type="entry name" value="Anticodon-bd"/>
</dbReference>
<dbReference type="InterPro" id="IPR036621">
    <property type="entry name" value="Anticodon-bd_dom_sf"/>
</dbReference>
<dbReference type="InterPro" id="IPR002316">
    <property type="entry name" value="Pro-tRNA-ligase_IIa"/>
</dbReference>
<dbReference type="InterPro" id="IPR004500">
    <property type="entry name" value="Pro-tRNA-synth_IIa_bac-type"/>
</dbReference>
<dbReference type="InterPro" id="IPR023717">
    <property type="entry name" value="Pro-tRNA-Synthase_IIa_type1"/>
</dbReference>
<dbReference type="InterPro" id="IPR050062">
    <property type="entry name" value="Pro-tRNA_synthetase"/>
</dbReference>
<dbReference type="InterPro" id="IPR044140">
    <property type="entry name" value="ProRS_anticodon_short"/>
</dbReference>
<dbReference type="InterPro" id="IPR033730">
    <property type="entry name" value="ProRS_core_prok"/>
</dbReference>
<dbReference type="InterPro" id="IPR036754">
    <property type="entry name" value="YbaK/aa-tRNA-synt-asso_dom_sf"/>
</dbReference>
<dbReference type="InterPro" id="IPR007214">
    <property type="entry name" value="YbaK/aa-tRNA-synth-assoc-dom"/>
</dbReference>
<dbReference type="NCBIfam" id="NF006625">
    <property type="entry name" value="PRK09194.1"/>
    <property type="match status" value="1"/>
</dbReference>
<dbReference type="NCBIfam" id="TIGR00409">
    <property type="entry name" value="proS_fam_II"/>
    <property type="match status" value="1"/>
</dbReference>
<dbReference type="PANTHER" id="PTHR42753">
    <property type="entry name" value="MITOCHONDRIAL RIBOSOME PROTEIN L39/PROLYL-TRNA LIGASE FAMILY MEMBER"/>
    <property type="match status" value="1"/>
</dbReference>
<dbReference type="PANTHER" id="PTHR42753:SF2">
    <property type="entry name" value="PROLINE--TRNA LIGASE"/>
    <property type="match status" value="1"/>
</dbReference>
<dbReference type="Pfam" id="PF03129">
    <property type="entry name" value="HGTP_anticodon"/>
    <property type="match status" value="1"/>
</dbReference>
<dbReference type="Pfam" id="PF00587">
    <property type="entry name" value="tRNA-synt_2b"/>
    <property type="match status" value="1"/>
</dbReference>
<dbReference type="Pfam" id="PF04073">
    <property type="entry name" value="tRNA_edit"/>
    <property type="match status" value="1"/>
</dbReference>
<dbReference type="PIRSF" id="PIRSF001535">
    <property type="entry name" value="ProRS_1"/>
    <property type="match status" value="1"/>
</dbReference>
<dbReference type="PRINTS" id="PR01046">
    <property type="entry name" value="TRNASYNTHPRO"/>
</dbReference>
<dbReference type="SUPFAM" id="SSF52954">
    <property type="entry name" value="Class II aaRS ABD-related"/>
    <property type="match status" value="1"/>
</dbReference>
<dbReference type="SUPFAM" id="SSF55681">
    <property type="entry name" value="Class II aaRS and biotin synthetases"/>
    <property type="match status" value="1"/>
</dbReference>
<dbReference type="SUPFAM" id="SSF55826">
    <property type="entry name" value="YbaK/ProRS associated domain"/>
    <property type="match status" value="1"/>
</dbReference>
<dbReference type="PROSITE" id="PS50862">
    <property type="entry name" value="AA_TRNA_LIGASE_II"/>
    <property type="match status" value="1"/>
</dbReference>
<evidence type="ECO:0000255" key="1">
    <source>
        <dbReference type="HAMAP-Rule" id="MF_01569"/>
    </source>
</evidence>
<organism>
    <name type="scientific">Trichlorobacter lovleyi (strain ATCC BAA-1151 / DSM 17278 / SZ)</name>
    <name type="common">Geobacter lovleyi</name>
    <dbReference type="NCBI Taxonomy" id="398767"/>
    <lineage>
        <taxon>Bacteria</taxon>
        <taxon>Pseudomonadati</taxon>
        <taxon>Thermodesulfobacteriota</taxon>
        <taxon>Desulfuromonadia</taxon>
        <taxon>Geobacterales</taxon>
        <taxon>Geobacteraceae</taxon>
        <taxon>Trichlorobacter</taxon>
    </lineage>
</organism>
<sequence length="576" mass="63869">MRYTQFFIPTLKETPSDAEVVSHQLMMRSGMIRKIAAGIYTYMPLGLRSIRKFEQIVREEMNRAGAIELLMPGVQPAELWIESKRWAQYGKELLRFKDRKDNEFCMGPTHEEIITDIARREVKSYRQMPVNFYQIQTKFRDEIRPRFGLMRGREFIMKDAYSFDVDSSAADLSYDKMYQAYNRIFERCGLNFRAVEADTGSIGGSASHEFMVLASSGEDAIVSCNACRYAANVEKAEGVRQQQGGAGQQALTKVHTPDKKTIAEVAEFLGLPQSGTVKALVLSNGEGQFVMALVRGDHELNELKLKNRLGWDEIQMATDDEILRFTGSPPGFLGPLGLKAELQVVADYAVETMADFVIGANETDQHYTGANTGRDFQISQIADIRLIGAGDPCPRCSGGTLEVWRGIEVGHVFKLGTKYSSSMNATYLDKDGKEQIIFMGCYGIGIGRTVAASIEQNHDENGVIWPLPLAPFHCSVVAINAQKDEAVMAAAQDIHDRLEAAGVEVLLDDRDERPGVKFKDHDLIGIPLRIVVGGKNLAEGNVEFKQRAGGEMQLLAPEQAIESVIAKVRESCGGSR</sequence>
<protein>
    <recommendedName>
        <fullName evidence="1">Proline--tRNA ligase</fullName>
        <ecNumber evidence="1">6.1.1.15</ecNumber>
    </recommendedName>
    <alternativeName>
        <fullName evidence="1">Prolyl-tRNA synthetase</fullName>
        <shortName evidence="1">ProRS</shortName>
    </alternativeName>
</protein>
<feature type="chain" id="PRO_1000199390" description="Proline--tRNA ligase">
    <location>
        <begin position="1"/>
        <end position="576"/>
    </location>
</feature>
<reference key="1">
    <citation type="submission" date="2008-05" db="EMBL/GenBank/DDBJ databases">
        <title>Complete sequence of chromosome of Geobacter lovleyi SZ.</title>
        <authorList>
            <consortium name="US DOE Joint Genome Institute"/>
            <person name="Lucas S."/>
            <person name="Copeland A."/>
            <person name="Lapidus A."/>
            <person name="Glavina del Rio T."/>
            <person name="Dalin E."/>
            <person name="Tice H."/>
            <person name="Bruce D."/>
            <person name="Goodwin L."/>
            <person name="Pitluck S."/>
            <person name="Chertkov O."/>
            <person name="Meincke L."/>
            <person name="Brettin T."/>
            <person name="Detter J.C."/>
            <person name="Han C."/>
            <person name="Tapia R."/>
            <person name="Kuske C.R."/>
            <person name="Schmutz J."/>
            <person name="Larimer F."/>
            <person name="Land M."/>
            <person name="Hauser L."/>
            <person name="Kyrpides N."/>
            <person name="Mikhailova N."/>
            <person name="Sung Y."/>
            <person name="Fletcher K.E."/>
            <person name="Ritalahti K.M."/>
            <person name="Loeffler F.E."/>
            <person name="Richardson P."/>
        </authorList>
    </citation>
    <scope>NUCLEOTIDE SEQUENCE [LARGE SCALE GENOMIC DNA]</scope>
    <source>
        <strain>ATCC BAA-1151 / DSM 17278 / SZ</strain>
    </source>
</reference>